<protein>
    <recommendedName>
        <fullName>Nitrogen regulatory protein</fullName>
    </recommendedName>
    <alternativeName>
        <fullName>Enzyme IIA-NTR</fullName>
    </alternativeName>
    <domain>
        <recommendedName>
            <fullName>Phosphotransferase enzyme IIA component</fullName>
        </recommendedName>
        <alternativeName>
            <fullName>PTS system EIIA component</fullName>
        </alternativeName>
    </domain>
</protein>
<keyword id="KW-0963">Cytoplasm</keyword>
<keyword id="KW-0418">Kinase</keyword>
<keyword id="KW-1185">Reference proteome</keyword>
<keyword id="KW-0808">Transferase</keyword>
<comment type="function">
    <text evidence="1">Seems to have a role in regulating nitrogen assimilation.</text>
</comment>
<comment type="subcellular location">
    <subcellularLocation>
        <location evidence="1">Cytoplasm</location>
    </subcellularLocation>
</comment>
<comment type="domain">
    <text evidence="1">The PTS EIIA type-2 domain may serve a regulatory function, through its phosphorylation activity.</text>
</comment>
<gene>
    <name type="primary">ptsN</name>
    <name type="ordered locus">PA4464</name>
</gene>
<dbReference type="EMBL" id="AE004091">
    <property type="protein sequence ID" value="AAG07852.1"/>
    <property type="molecule type" value="Genomic_DNA"/>
</dbReference>
<dbReference type="PIR" id="H83087">
    <property type="entry name" value="H83087"/>
</dbReference>
<dbReference type="RefSeq" id="NP_253154.1">
    <property type="nucleotide sequence ID" value="NC_002516.2"/>
</dbReference>
<dbReference type="RefSeq" id="WP_003098853.1">
    <property type="nucleotide sequence ID" value="NZ_QZGE01000004.1"/>
</dbReference>
<dbReference type="SMR" id="Q9HVV4"/>
<dbReference type="FunCoup" id="Q9HVV4">
    <property type="interactions" value="204"/>
</dbReference>
<dbReference type="STRING" id="208964.PA4464"/>
<dbReference type="PaxDb" id="208964-PA4464"/>
<dbReference type="GeneID" id="880997"/>
<dbReference type="KEGG" id="pae:PA4464"/>
<dbReference type="PATRIC" id="fig|208964.12.peg.4674"/>
<dbReference type="PseudoCAP" id="PA4464"/>
<dbReference type="HOGENOM" id="CLU_072531_5_2_6"/>
<dbReference type="InParanoid" id="Q9HVV4"/>
<dbReference type="OrthoDB" id="95460at2"/>
<dbReference type="PhylomeDB" id="Q9HVV4"/>
<dbReference type="BioCyc" id="PAER208964:G1FZ6-4553-MONOMER"/>
<dbReference type="Proteomes" id="UP000002438">
    <property type="component" value="Chromosome"/>
</dbReference>
<dbReference type="GO" id="GO:0005737">
    <property type="term" value="C:cytoplasm"/>
    <property type="evidence" value="ECO:0007669"/>
    <property type="project" value="UniProtKB-SubCell"/>
</dbReference>
<dbReference type="GO" id="GO:0016301">
    <property type="term" value="F:kinase activity"/>
    <property type="evidence" value="ECO:0007669"/>
    <property type="project" value="UniProtKB-KW"/>
</dbReference>
<dbReference type="GO" id="GO:0030295">
    <property type="term" value="F:protein kinase activator activity"/>
    <property type="evidence" value="ECO:0000318"/>
    <property type="project" value="GO_Central"/>
</dbReference>
<dbReference type="GO" id="GO:0008982">
    <property type="term" value="F:protein-N(PI)-phosphohistidine-sugar phosphotransferase activity"/>
    <property type="evidence" value="ECO:0007669"/>
    <property type="project" value="InterPro"/>
</dbReference>
<dbReference type="GO" id="GO:0009401">
    <property type="term" value="P:phosphoenolpyruvate-dependent sugar phosphotransferase system"/>
    <property type="evidence" value="ECO:0007669"/>
    <property type="project" value="InterPro"/>
</dbReference>
<dbReference type="CDD" id="cd00211">
    <property type="entry name" value="PTS_IIA_fru"/>
    <property type="match status" value="1"/>
</dbReference>
<dbReference type="Gene3D" id="3.40.930.10">
    <property type="entry name" value="Mannitol-specific EII, Chain A"/>
    <property type="match status" value="1"/>
</dbReference>
<dbReference type="InterPro" id="IPR016152">
    <property type="entry name" value="PTrfase/Anion_transptr"/>
</dbReference>
<dbReference type="InterPro" id="IPR002178">
    <property type="entry name" value="PTS_EIIA_type-2_dom"/>
</dbReference>
<dbReference type="InterPro" id="IPR006320">
    <property type="entry name" value="PTS_Nitro_regul"/>
</dbReference>
<dbReference type="InterPro" id="IPR051541">
    <property type="entry name" value="PTS_SugarTrans_NitroReg"/>
</dbReference>
<dbReference type="NCBIfam" id="TIGR01419">
    <property type="entry name" value="nitro_reg_IIA"/>
    <property type="match status" value="1"/>
</dbReference>
<dbReference type="PANTHER" id="PTHR47738:SF1">
    <property type="entry name" value="NITROGEN REGULATORY PROTEIN"/>
    <property type="match status" value="1"/>
</dbReference>
<dbReference type="PANTHER" id="PTHR47738">
    <property type="entry name" value="PTS SYSTEM FRUCTOSE-LIKE EIIA COMPONENT-RELATED"/>
    <property type="match status" value="1"/>
</dbReference>
<dbReference type="Pfam" id="PF00359">
    <property type="entry name" value="PTS_EIIA_2"/>
    <property type="match status" value="1"/>
</dbReference>
<dbReference type="SUPFAM" id="SSF55804">
    <property type="entry name" value="Phoshotransferase/anion transport protein"/>
    <property type="match status" value="1"/>
</dbReference>
<dbReference type="PROSITE" id="PS51094">
    <property type="entry name" value="PTS_EIIA_TYPE_2"/>
    <property type="match status" value="1"/>
</dbReference>
<dbReference type="PROSITE" id="PS00372">
    <property type="entry name" value="PTS_EIIA_TYPE_2_HIS"/>
    <property type="match status" value="1"/>
</dbReference>
<proteinExistence type="inferred from homology"/>
<accession>Q9HVV4</accession>
<sequence length="154" mass="16730">MIRLEQILTPGRSLVNVPGGSKKRVLEQIANLVARELPEFDAQTIFENLVAREKLGSTGFGNGIAIPHCRLSGCQSPISAVLHLDAPVDFDALDGAPVDLLFVLLVPEAATEEHLELLRQIAAMLDRADVRDRLRSAPTAEALYQIVVDVQNGQ</sequence>
<feature type="chain" id="PRO_0000287733" description="Nitrogen regulatory protein">
    <location>
        <begin position="1"/>
        <end position="154"/>
    </location>
</feature>
<feature type="domain" description="PTS EIIA type-2" evidence="2">
    <location>
        <begin position="6"/>
        <end position="150"/>
    </location>
</feature>
<feature type="active site" description="Tele-phosphohistidine intermediate" evidence="2">
    <location>
        <position position="68"/>
    </location>
</feature>
<name>PTSN_PSEAE</name>
<reference key="1">
    <citation type="journal article" date="2000" name="Nature">
        <title>Complete genome sequence of Pseudomonas aeruginosa PAO1, an opportunistic pathogen.</title>
        <authorList>
            <person name="Stover C.K."/>
            <person name="Pham X.-Q.T."/>
            <person name="Erwin A.L."/>
            <person name="Mizoguchi S.D."/>
            <person name="Warrener P."/>
            <person name="Hickey M.J."/>
            <person name="Brinkman F.S.L."/>
            <person name="Hufnagle W.O."/>
            <person name="Kowalik D.J."/>
            <person name="Lagrou M."/>
            <person name="Garber R.L."/>
            <person name="Goltry L."/>
            <person name="Tolentino E."/>
            <person name="Westbrock-Wadman S."/>
            <person name="Yuan Y."/>
            <person name="Brody L.L."/>
            <person name="Coulter S.N."/>
            <person name="Folger K.R."/>
            <person name="Kas A."/>
            <person name="Larbig K."/>
            <person name="Lim R.M."/>
            <person name="Smith K.A."/>
            <person name="Spencer D.H."/>
            <person name="Wong G.K.-S."/>
            <person name="Wu Z."/>
            <person name="Paulsen I.T."/>
            <person name="Reizer J."/>
            <person name="Saier M.H. Jr."/>
            <person name="Hancock R.E.W."/>
            <person name="Lory S."/>
            <person name="Olson M.V."/>
        </authorList>
    </citation>
    <scope>NUCLEOTIDE SEQUENCE [LARGE SCALE GENOMIC DNA]</scope>
    <source>
        <strain>ATCC 15692 / DSM 22644 / CIP 104116 / JCM 14847 / LMG 12228 / 1C / PRS 101 / PAO1</strain>
    </source>
</reference>
<organism>
    <name type="scientific">Pseudomonas aeruginosa (strain ATCC 15692 / DSM 22644 / CIP 104116 / JCM 14847 / LMG 12228 / 1C / PRS 101 / PAO1)</name>
    <dbReference type="NCBI Taxonomy" id="208964"/>
    <lineage>
        <taxon>Bacteria</taxon>
        <taxon>Pseudomonadati</taxon>
        <taxon>Pseudomonadota</taxon>
        <taxon>Gammaproteobacteria</taxon>
        <taxon>Pseudomonadales</taxon>
        <taxon>Pseudomonadaceae</taxon>
        <taxon>Pseudomonas</taxon>
    </lineage>
</organism>
<evidence type="ECO:0000250" key="1"/>
<evidence type="ECO:0000255" key="2">
    <source>
        <dbReference type="PROSITE-ProRule" id="PRU00417"/>
    </source>
</evidence>